<proteinExistence type="inferred from homology"/>
<sequence length="454" mass="50070">MKTIIEPFRIKSVEPIRLTSRPERERLARAAGYNLFGLHSDDVLIDLLTDSGTGAMSSLQWAAVMQGDESYAGSPSFFRFEAAVQNLMPFKHIIPTHQGRAAEAILFSIFGGKGRRIPSNTHFDTTRGNIEASGATGDDLVIAEGKDPQNLHPFKGNMDLARLEAYLEAHHAEVPLVMITITNNAGGGQPVSLANIRAVADLAHRYGKPFVIDGCRFAENAWFIKTREEGQADRSIPEIVRDCFAVADGMTMSAKKDAFGNIGGWLALNDDDLAEEARGHLIRTEGFPTYGGLAGRDLDALAQGLVEIVDEDYLRYRIRTHQYIVERLDAMGVPVVKPAGGHAVFIDARAWLSHIPPLEYPGQALAVALYEIAGVRSCEIGTAMFGRQPDGSEKPAAMDLVRLAFPRRTYTQSHADYIVEAFEELAATKDALRGYRIVKEPKLMRHFTCRFEKL</sequence>
<name>TNAA_RHOCA</name>
<feature type="chain" id="PRO_0000195620" description="Tryptophanase">
    <location>
        <begin position="1"/>
        <end position="454"/>
    </location>
</feature>
<feature type="modified residue" description="N6-(pyridoxal phosphate)lysine" evidence="1">
    <location>
        <position position="256"/>
    </location>
</feature>
<protein>
    <recommendedName>
        <fullName>Tryptophanase</fullName>
        <ecNumber>4.1.99.1</ecNumber>
    </recommendedName>
    <alternativeName>
        <fullName>L-tryptophan indole-lyase</fullName>
        <shortName>TNase</shortName>
    </alternativeName>
</protein>
<gene>
    <name type="primary">tnaA</name>
</gene>
<reference key="1">
    <citation type="journal article" date="1998" name="J. Bacteriol.">
        <title>Molecular cloning and expression analysis of the Rhodobacter capsulatus sodB gene, encoding an iron superoxide dismutase.</title>
        <authorList>
            <person name="Cortez N."/>
            <person name="Carrillo N."/>
            <person name="Pasternak C."/>
            <person name="Balzer A."/>
            <person name="Klug G."/>
        </authorList>
    </citation>
    <scope>NUCLEOTIDE SEQUENCE [GENOMIC DNA]</scope>
    <source>
        <strain>DSM 938 / 37b4</strain>
    </source>
</reference>
<dbReference type="EC" id="4.1.99.1"/>
<dbReference type="EMBL" id="AF022932">
    <property type="protein sequence ID" value="AAC64208.1"/>
    <property type="molecule type" value="Genomic_DNA"/>
</dbReference>
<dbReference type="PIR" id="T45297">
    <property type="entry name" value="T45297"/>
</dbReference>
<dbReference type="RefSeq" id="WP_055210628.1">
    <property type="nucleotide sequence ID" value="NZ_CP061202.1"/>
</dbReference>
<dbReference type="SMR" id="O30971"/>
<dbReference type="OrthoDB" id="9764079at2"/>
<dbReference type="UniPathway" id="UPA00332">
    <property type="reaction ID" value="UER00452"/>
</dbReference>
<dbReference type="GO" id="GO:0009034">
    <property type="term" value="F:tryptophanase activity"/>
    <property type="evidence" value="ECO:0007669"/>
    <property type="project" value="UniProtKB-UniRule"/>
</dbReference>
<dbReference type="CDD" id="cd00617">
    <property type="entry name" value="Tnase_like"/>
    <property type="match status" value="1"/>
</dbReference>
<dbReference type="Gene3D" id="3.90.1150.10">
    <property type="entry name" value="Aspartate Aminotransferase, domain 1"/>
    <property type="match status" value="1"/>
</dbReference>
<dbReference type="Gene3D" id="3.40.640.10">
    <property type="entry name" value="Type I PLP-dependent aspartate aminotransferase-like (Major domain)"/>
    <property type="match status" value="1"/>
</dbReference>
<dbReference type="HAMAP" id="MF_00544">
    <property type="entry name" value="Tryptophanase"/>
    <property type="match status" value="1"/>
</dbReference>
<dbReference type="InterPro" id="IPR001597">
    <property type="entry name" value="ArAA_b-elim_lyase/Thr_aldolase"/>
</dbReference>
<dbReference type="InterPro" id="IPR011166">
    <property type="entry name" value="Beta-eliminating_lyase"/>
</dbReference>
<dbReference type="InterPro" id="IPR015424">
    <property type="entry name" value="PyrdxlP-dep_Trfase"/>
</dbReference>
<dbReference type="InterPro" id="IPR015421">
    <property type="entry name" value="PyrdxlP-dep_Trfase_major"/>
</dbReference>
<dbReference type="InterPro" id="IPR015422">
    <property type="entry name" value="PyrdxlP-dep_Trfase_small"/>
</dbReference>
<dbReference type="InterPro" id="IPR013440">
    <property type="entry name" value="TNase"/>
</dbReference>
<dbReference type="InterPro" id="IPR018176">
    <property type="entry name" value="Tryptophanase_CS"/>
</dbReference>
<dbReference type="NCBIfam" id="NF009709">
    <property type="entry name" value="PRK13238.1"/>
    <property type="match status" value="1"/>
</dbReference>
<dbReference type="PANTHER" id="PTHR32325">
    <property type="entry name" value="BETA-ELIMINATING LYASE-LIKE PROTEIN-RELATED"/>
    <property type="match status" value="1"/>
</dbReference>
<dbReference type="PANTHER" id="PTHR32325:SF4">
    <property type="entry name" value="TRYPTOPHANASE"/>
    <property type="match status" value="1"/>
</dbReference>
<dbReference type="Pfam" id="PF01212">
    <property type="entry name" value="Beta_elim_lyase"/>
    <property type="match status" value="1"/>
</dbReference>
<dbReference type="PIRSF" id="PIRSF001386">
    <property type="entry name" value="Trpase"/>
    <property type="match status" value="1"/>
</dbReference>
<dbReference type="SUPFAM" id="SSF53383">
    <property type="entry name" value="PLP-dependent transferases"/>
    <property type="match status" value="1"/>
</dbReference>
<dbReference type="PROSITE" id="PS00853">
    <property type="entry name" value="BETA_ELIM_LYASE"/>
    <property type="match status" value="1"/>
</dbReference>
<accession>O30971</accession>
<keyword id="KW-0456">Lyase</keyword>
<keyword id="KW-0663">Pyridoxal phosphate</keyword>
<keyword id="KW-0823">Tryptophan catabolism</keyword>
<comment type="catalytic activity">
    <reaction>
        <text>L-tryptophan + H2O = indole + pyruvate + NH4(+)</text>
        <dbReference type="Rhea" id="RHEA:19553"/>
        <dbReference type="ChEBI" id="CHEBI:15361"/>
        <dbReference type="ChEBI" id="CHEBI:15377"/>
        <dbReference type="ChEBI" id="CHEBI:16881"/>
        <dbReference type="ChEBI" id="CHEBI:28938"/>
        <dbReference type="ChEBI" id="CHEBI:57912"/>
        <dbReference type="EC" id="4.1.99.1"/>
    </reaction>
</comment>
<comment type="cofactor">
    <cofactor evidence="1">
        <name>pyridoxal 5'-phosphate</name>
        <dbReference type="ChEBI" id="CHEBI:597326"/>
    </cofactor>
</comment>
<comment type="pathway">
    <text>Amino-acid degradation; L-tryptophan degradation via pyruvate pathway; indole and pyruvate from L-tryptophan: step 1/1.</text>
</comment>
<comment type="subunit">
    <text evidence="1">Homotetramer.</text>
</comment>
<comment type="similarity">
    <text evidence="2">Belongs to the beta-eliminating lyase family.</text>
</comment>
<evidence type="ECO:0000250" key="1"/>
<evidence type="ECO:0000305" key="2"/>
<organism>
    <name type="scientific">Rhodobacter capsulatus</name>
    <name type="common">Rhodopseudomonas capsulata</name>
    <dbReference type="NCBI Taxonomy" id="1061"/>
    <lineage>
        <taxon>Bacteria</taxon>
        <taxon>Pseudomonadati</taxon>
        <taxon>Pseudomonadota</taxon>
        <taxon>Alphaproteobacteria</taxon>
        <taxon>Rhodobacterales</taxon>
        <taxon>Rhodobacter group</taxon>
        <taxon>Rhodobacter</taxon>
    </lineage>
</organism>